<sequence>MLTAIRKNGLILAVFACVSTGLVALTYALTAEQIQQQEQKQLLQVLNQVIPHKYHDNPLAQACTLVNDDKLGTAKPMHAYLAQRDGQPTAIAIETIAPDGYNGEIKLIVGIANNGTVLGVRVLAHQETPGLGDKIDLRISNWVLGFNGQQVTADNQDDWKVRKDGGQFDQFTGATITPRAVVLAVKKAVEYVNQHQQQLHNQPNPCEGQ</sequence>
<comment type="function">
    <text evidence="1">Part of a membrane-bound complex that couples electron transfer with translocation of ions across the membrane.</text>
</comment>
<comment type="cofactor">
    <cofactor evidence="1 2">
        <name>FMN</name>
        <dbReference type="ChEBI" id="CHEBI:58210"/>
    </cofactor>
</comment>
<comment type="subunit">
    <text evidence="1">The complex is composed of six subunits: RnfA, RnfB, RnfC, RnfD, RnfE and RnfG.</text>
</comment>
<comment type="subcellular location">
    <subcellularLocation>
        <location evidence="1 2 3">Cell inner membrane</location>
        <topology evidence="1">Single-pass membrane protein</topology>
    </subcellularLocation>
</comment>
<comment type="similarity">
    <text evidence="1">Belongs to the RnfG family.</text>
</comment>
<evidence type="ECO:0000255" key="1">
    <source>
        <dbReference type="HAMAP-Rule" id="MF_00479"/>
    </source>
</evidence>
<evidence type="ECO:0000269" key="2">
    <source>
    </source>
</evidence>
<evidence type="ECO:0000269" key="3">
    <source>
    </source>
</evidence>
<evidence type="ECO:0000305" key="4"/>
<evidence type="ECO:0000305" key="5">
    <source>
    </source>
</evidence>
<evidence type="ECO:0000305" key="6">
    <source>
    </source>
</evidence>
<keyword id="KW-0997">Cell inner membrane</keyword>
<keyword id="KW-1003">Cell membrane</keyword>
<keyword id="KW-0249">Electron transport</keyword>
<keyword id="KW-0285">Flavoprotein</keyword>
<keyword id="KW-0288">FMN</keyword>
<keyword id="KW-0472">Membrane</keyword>
<keyword id="KW-0597">Phosphoprotein</keyword>
<keyword id="KW-1278">Translocase</keyword>
<keyword id="KW-0812">Transmembrane</keyword>
<keyword id="KW-1133">Transmembrane helix</keyword>
<keyword id="KW-0813">Transport</keyword>
<name>RNFG_VIBC3</name>
<protein>
    <recommendedName>
        <fullName evidence="1 4">Ion-translocating oxidoreductase complex subunit G</fullName>
        <ecNumber evidence="1 4">7.-.-.-</ecNumber>
    </recommendedName>
    <alternativeName>
        <fullName evidence="1 4">Rnf electron transport complex subunit G</fullName>
    </alternativeName>
</protein>
<dbReference type="EC" id="7.-.-.-" evidence="1 4"/>
<dbReference type="EMBL" id="CP000627">
    <property type="protein sequence ID" value="ABQ22193.1"/>
    <property type="molecule type" value="Genomic_DNA"/>
</dbReference>
<dbReference type="EMBL" id="CP001235">
    <property type="protein sequence ID" value="ACP09040.1"/>
    <property type="molecule type" value="Genomic_DNA"/>
</dbReference>
<dbReference type="SMR" id="A5F2S8"/>
<dbReference type="KEGG" id="vco:VC0395_A0534"/>
<dbReference type="KEGG" id="vcr:VC395_1028"/>
<dbReference type="PATRIC" id="fig|345073.21.peg.998"/>
<dbReference type="eggNOG" id="COG4659">
    <property type="taxonomic scope" value="Bacteria"/>
</dbReference>
<dbReference type="HOGENOM" id="CLU_077882_1_0_6"/>
<dbReference type="OrthoDB" id="9784165at2"/>
<dbReference type="Proteomes" id="UP000000249">
    <property type="component" value="Chromosome 2"/>
</dbReference>
<dbReference type="GO" id="GO:0005886">
    <property type="term" value="C:plasma membrane"/>
    <property type="evidence" value="ECO:0007669"/>
    <property type="project" value="UniProtKB-SubCell"/>
</dbReference>
<dbReference type="GO" id="GO:0009055">
    <property type="term" value="F:electron transfer activity"/>
    <property type="evidence" value="ECO:0007669"/>
    <property type="project" value="InterPro"/>
</dbReference>
<dbReference type="GO" id="GO:0010181">
    <property type="term" value="F:FMN binding"/>
    <property type="evidence" value="ECO:0007669"/>
    <property type="project" value="InterPro"/>
</dbReference>
<dbReference type="GO" id="GO:0022900">
    <property type="term" value="P:electron transport chain"/>
    <property type="evidence" value="ECO:0007669"/>
    <property type="project" value="UniProtKB-UniRule"/>
</dbReference>
<dbReference type="HAMAP" id="MF_00479">
    <property type="entry name" value="RsxG_RnfG"/>
    <property type="match status" value="1"/>
</dbReference>
<dbReference type="InterPro" id="IPR007329">
    <property type="entry name" value="FMN-bd"/>
</dbReference>
<dbReference type="InterPro" id="IPR010209">
    <property type="entry name" value="Ion_transpt_RnfG/RsxG"/>
</dbReference>
<dbReference type="NCBIfam" id="NF002519">
    <property type="entry name" value="PRK01908.1"/>
    <property type="match status" value="1"/>
</dbReference>
<dbReference type="NCBIfam" id="TIGR01947">
    <property type="entry name" value="rnfG"/>
    <property type="match status" value="1"/>
</dbReference>
<dbReference type="PANTHER" id="PTHR36118">
    <property type="entry name" value="ION-TRANSLOCATING OXIDOREDUCTASE COMPLEX SUBUNIT G"/>
    <property type="match status" value="1"/>
</dbReference>
<dbReference type="PANTHER" id="PTHR36118:SF1">
    <property type="entry name" value="ION-TRANSLOCATING OXIDOREDUCTASE COMPLEX SUBUNIT G"/>
    <property type="match status" value="1"/>
</dbReference>
<dbReference type="Pfam" id="PF04205">
    <property type="entry name" value="FMN_bind"/>
    <property type="match status" value="1"/>
</dbReference>
<dbReference type="PIRSF" id="PIRSF006091">
    <property type="entry name" value="E_trnsport_RnfG"/>
    <property type="match status" value="1"/>
</dbReference>
<dbReference type="SMART" id="SM00900">
    <property type="entry name" value="FMN_bind"/>
    <property type="match status" value="1"/>
</dbReference>
<reference key="1">
    <citation type="submission" date="2007-03" db="EMBL/GenBank/DDBJ databases">
        <authorList>
            <person name="Heidelberg J."/>
        </authorList>
    </citation>
    <scope>NUCLEOTIDE SEQUENCE [LARGE SCALE GENOMIC DNA]</scope>
    <source>
        <strain>ATCC 39541 / Classical Ogawa 395 / O395</strain>
    </source>
</reference>
<reference key="2">
    <citation type="journal article" date="2008" name="PLoS ONE">
        <title>A recalibrated molecular clock and independent origins for the cholera pandemic clones.</title>
        <authorList>
            <person name="Feng L."/>
            <person name="Reeves P.R."/>
            <person name="Lan R."/>
            <person name="Ren Y."/>
            <person name="Gao C."/>
            <person name="Zhou Z."/>
            <person name="Ren Y."/>
            <person name="Cheng J."/>
            <person name="Wang W."/>
            <person name="Wang J."/>
            <person name="Qian W."/>
            <person name="Li D."/>
            <person name="Wang L."/>
        </authorList>
    </citation>
    <scope>NUCLEOTIDE SEQUENCE [LARGE SCALE GENOMIC DNA]</scope>
    <source>
        <strain>ATCC 39541 / Classical Ogawa 395 / O395</strain>
    </source>
</reference>
<reference key="3">
    <citation type="journal article" date="2008" name="Biochemistry">
        <title>Covalent binding of flavins to RnfG and RnfD in the Rnf complex from Vibrio cholerae.</title>
        <authorList>
            <person name="Backiel J."/>
            <person name="Juarez O."/>
            <person name="Zagorevski D.V."/>
            <person name="Wang Z."/>
            <person name="Nilges M.J."/>
            <person name="Barquera B."/>
        </authorList>
    </citation>
    <scope>COFACTOR</scope>
    <scope>PROSTHETIC GROUP AT THR-175</scope>
    <scope>SUBCELLULAR LOCATION</scope>
    <scope>TOPOLOGY</scope>
    <scope>MUTAGENESIS OF THR-175</scope>
    <source>
        <strain>ATCC 39541 / Classical Ogawa 395 / O395</strain>
    </source>
</reference>
<reference key="4">
    <citation type="journal article" date="2015" name="Biochemistry">
        <title>Complete topology of the RNF complex from Vibrio cholerae.</title>
        <authorList>
            <person name="Hreha T.N."/>
            <person name="Mezic K.G."/>
            <person name="Herce H.D."/>
            <person name="Duffy E.B."/>
            <person name="Bourges A."/>
            <person name="Pryshchep S."/>
            <person name="Juarez O."/>
            <person name="Barquera B."/>
        </authorList>
    </citation>
    <scope>SUBCELLULAR LOCATION</scope>
    <scope>TOPOLOGY</scope>
    <source>
        <strain>ATCC 39541 / Classical Ogawa 395 / O395</strain>
    </source>
</reference>
<gene>
    <name evidence="1" type="primary">rnfG</name>
    <name type="ordered locus">VC0395_A0534</name>
    <name type="ordered locus">VC395_1028</name>
</gene>
<accession>A5F2S8</accession>
<accession>C3LZ24</accession>
<feature type="chain" id="PRO_1000072401" description="Ion-translocating oxidoreductase complex subunit G">
    <location>
        <begin position="1"/>
        <end position="209"/>
    </location>
</feature>
<feature type="topological domain" description="Cytoplasmic" evidence="5 6">
    <location>
        <begin position="1"/>
        <end position="8"/>
    </location>
</feature>
<feature type="transmembrane region" description="Helical" evidence="1">
    <location>
        <begin position="9"/>
        <end position="29"/>
    </location>
</feature>
<feature type="topological domain" description="Periplasmic" evidence="2 3">
    <location>
        <begin position="30"/>
        <end position="209"/>
    </location>
</feature>
<feature type="modified residue" description="FMN phosphoryl threonine" evidence="1 2">
    <location>
        <position position="175"/>
    </location>
</feature>
<feature type="mutagenesis site" description="Abolishes flavin binding." evidence="2">
    <original>T</original>
    <variation>L</variation>
    <location>
        <position position="175"/>
    </location>
</feature>
<proteinExistence type="evidence at protein level"/>
<organism>
    <name type="scientific">Vibrio cholerae serotype O1 (strain ATCC 39541 / Classical Ogawa 395 / O395)</name>
    <dbReference type="NCBI Taxonomy" id="345073"/>
    <lineage>
        <taxon>Bacteria</taxon>
        <taxon>Pseudomonadati</taxon>
        <taxon>Pseudomonadota</taxon>
        <taxon>Gammaproteobacteria</taxon>
        <taxon>Vibrionales</taxon>
        <taxon>Vibrionaceae</taxon>
        <taxon>Vibrio</taxon>
    </lineage>
</organism>